<dbReference type="EMBL" id="AL123456">
    <property type="protein sequence ID" value="CCP43236.1"/>
    <property type="molecule type" value="Genomic_DNA"/>
</dbReference>
<dbReference type="RefSeq" id="WP_003402437.1">
    <property type="nucleotide sequence ID" value="NZ_NVQJ01000002.1"/>
</dbReference>
<dbReference type="RefSeq" id="YP_177624.1">
    <property type="nucleotide sequence ID" value="NC_000962.3"/>
</dbReference>
<dbReference type="SMR" id="P9WKT7"/>
<dbReference type="STRING" id="83332.Rv0500A"/>
<dbReference type="PaxDb" id="83332-Rv0500A"/>
<dbReference type="DNASU" id="3205035"/>
<dbReference type="GeneID" id="3205035"/>
<dbReference type="KEGG" id="mtu:Rv0500A"/>
<dbReference type="KEGG" id="mtv:RVBD_0500A"/>
<dbReference type="TubercuList" id="Rv0500A"/>
<dbReference type="eggNOG" id="COG3311">
    <property type="taxonomic scope" value="Bacteria"/>
</dbReference>
<dbReference type="InParanoid" id="P9WKT7"/>
<dbReference type="OrthoDB" id="1853825at2"/>
<dbReference type="PhylomeDB" id="P9WKT7"/>
<dbReference type="Proteomes" id="UP000001584">
    <property type="component" value="Chromosome"/>
</dbReference>
<dbReference type="GO" id="GO:0003677">
    <property type="term" value="F:DNA binding"/>
    <property type="evidence" value="ECO:0007669"/>
    <property type="project" value="UniProtKB-KW"/>
</dbReference>
<dbReference type="InterPro" id="IPR009061">
    <property type="entry name" value="DNA-bd_dom_put_sf"/>
</dbReference>
<dbReference type="InterPro" id="IPR041657">
    <property type="entry name" value="HTH_17"/>
</dbReference>
<dbReference type="InterPro" id="IPR010093">
    <property type="entry name" value="SinI_DNA-bd"/>
</dbReference>
<dbReference type="NCBIfam" id="TIGR01764">
    <property type="entry name" value="excise"/>
    <property type="match status" value="1"/>
</dbReference>
<dbReference type="Pfam" id="PF12728">
    <property type="entry name" value="HTH_17"/>
    <property type="match status" value="1"/>
</dbReference>
<dbReference type="SUPFAM" id="SSF46955">
    <property type="entry name" value="Putative DNA-binding domain"/>
    <property type="match status" value="1"/>
</dbReference>
<gene>
    <name type="ordered locus">Rv0500A</name>
</gene>
<proteinExistence type="evidence at protein level"/>
<keyword id="KW-0238">DNA-binding</keyword>
<keyword id="KW-1185">Reference proteome</keyword>
<evidence type="ECO:0000250" key="1"/>
<protein>
    <recommendedName>
        <fullName>Putative DNA-binding protein Rv0500A</fullName>
    </recommendedName>
</protein>
<reference key="1">
    <citation type="journal article" date="1998" name="Nature">
        <title>Deciphering the biology of Mycobacterium tuberculosis from the complete genome sequence.</title>
        <authorList>
            <person name="Cole S.T."/>
            <person name="Brosch R."/>
            <person name="Parkhill J."/>
            <person name="Garnier T."/>
            <person name="Churcher C.M."/>
            <person name="Harris D.E."/>
            <person name="Gordon S.V."/>
            <person name="Eiglmeier K."/>
            <person name="Gas S."/>
            <person name="Barry C.E. III"/>
            <person name="Tekaia F."/>
            <person name="Badcock K."/>
            <person name="Basham D."/>
            <person name="Brown D."/>
            <person name="Chillingworth T."/>
            <person name="Connor R."/>
            <person name="Davies R.M."/>
            <person name="Devlin K."/>
            <person name="Feltwell T."/>
            <person name="Gentles S."/>
            <person name="Hamlin N."/>
            <person name="Holroyd S."/>
            <person name="Hornsby T."/>
            <person name="Jagels K."/>
            <person name="Krogh A."/>
            <person name="McLean J."/>
            <person name="Moule S."/>
            <person name="Murphy L.D."/>
            <person name="Oliver S."/>
            <person name="Osborne J."/>
            <person name="Quail M.A."/>
            <person name="Rajandream M.A."/>
            <person name="Rogers J."/>
            <person name="Rutter S."/>
            <person name="Seeger K."/>
            <person name="Skelton S."/>
            <person name="Squares S."/>
            <person name="Squares R."/>
            <person name="Sulston J.E."/>
            <person name="Taylor K."/>
            <person name="Whitehead S."/>
            <person name="Barrell B.G."/>
        </authorList>
    </citation>
    <scope>NUCLEOTIDE SEQUENCE [LARGE SCALE GENOMIC DNA]</scope>
    <source>
        <strain>ATCC 25618 / H37Rv</strain>
    </source>
</reference>
<reference key="2">
    <citation type="journal article" date="2002" name="Microbiology">
        <title>Re-annotation of the genome sequence of Mycobacterium tuberculosis H37Rv.</title>
        <authorList>
            <person name="Camus J.-C."/>
            <person name="Pryor M.J."/>
            <person name="Medigue C."/>
            <person name="Cole S.T."/>
        </authorList>
    </citation>
    <scope>IDENTIFICATION</scope>
    <source>
        <strain>ATCC 25618 / H37Rv</strain>
    </source>
</reference>
<reference key="3">
    <citation type="journal article" date="2011" name="Mol. Cell. Proteomics">
        <title>Proteogenomic analysis of Mycobacterium tuberculosis by high resolution mass spectrometry.</title>
        <authorList>
            <person name="Kelkar D.S."/>
            <person name="Kumar D."/>
            <person name="Kumar P."/>
            <person name="Balakrishnan L."/>
            <person name="Muthusamy B."/>
            <person name="Yadav A.K."/>
            <person name="Shrivastava P."/>
            <person name="Marimuthu A."/>
            <person name="Anand S."/>
            <person name="Sundaram H."/>
            <person name="Kingsbury R."/>
            <person name="Harsha H.C."/>
            <person name="Nair B."/>
            <person name="Prasad T.S."/>
            <person name="Chauhan D.S."/>
            <person name="Katoch K."/>
            <person name="Katoch V.M."/>
            <person name="Kumar P."/>
            <person name="Chaerkady R."/>
            <person name="Ramachandran S."/>
            <person name="Dash D."/>
            <person name="Pandey A."/>
        </authorList>
    </citation>
    <scope>IDENTIFICATION BY MASS SPECTROMETRY [LARGE SCALE ANALYSIS]</scope>
    <source>
        <strain>ATCC 25618 / H37Rv</strain>
    </source>
</reference>
<accession>P9WKT7</accession>
<accession>L0T3Y2</accession>
<accession>Q6MX35</accession>
<accession>Q8VKK5</accession>
<organism>
    <name type="scientific">Mycobacterium tuberculosis (strain ATCC 25618 / H37Rv)</name>
    <dbReference type="NCBI Taxonomy" id="83332"/>
    <lineage>
        <taxon>Bacteria</taxon>
        <taxon>Bacillati</taxon>
        <taxon>Actinomycetota</taxon>
        <taxon>Actinomycetes</taxon>
        <taxon>Mycobacteriales</taxon>
        <taxon>Mycobacteriaceae</taxon>
        <taxon>Mycobacterium</taxon>
        <taxon>Mycobacterium tuberculosis complex</taxon>
    </lineage>
</organism>
<sequence>MTSTNGPSARDTGFVEGQQAKTQLLTVAEVAALMRVSKMTVYRLVHNGELPAVRVGRSFRVHAKAVHDMLETSYFDAG</sequence>
<feature type="chain" id="PRO_0000399397" description="Putative DNA-binding protein Rv0500A">
    <location>
        <begin position="1"/>
        <end position="78"/>
    </location>
</feature>
<feature type="DNA-binding region" description="H-T-H motif" evidence="1">
    <location>
        <begin position="24"/>
        <end position="45"/>
    </location>
</feature>
<name>Y500A_MYCTU</name>